<keyword id="KW-0040">ANK repeat</keyword>
<keyword id="KW-0677">Repeat</keyword>
<protein>
    <recommendedName>
        <fullName>Putative ankyrin repeat protein RBE_0220</fullName>
    </recommendedName>
</protein>
<gene>
    <name type="ordered locus">RBE_0220</name>
</gene>
<name>Y220_RICBR</name>
<dbReference type="EMBL" id="CP000087">
    <property type="protein sequence ID" value="ABE04301.1"/>
    <property type="molecule type" value="Genomic_DNA"/>
</dbReference>
<dbReference type="RefSeq" id="WP_011476914.1">
    <property type="nucleotide sequence ID" value="NC_007940.1"/>
</dbReference>
<dbReference type="SMR" id="Q1RK13"/>
<dbReference type="KEGG" id="rbe:RBE_0220"/>
<dbReference type="eggNOG" id="COG0666">
    <property type="taxonomic scope" value="Bacteria"/>
</dbReference>
<dbReference type="HOGENOM" id="CLU_342843_0_0_5"/>
<dbReference type="OrthoDB" id="7164678at2"/>
<dbReference type="Proteomes" id="UP000001951">
    <property type="component" value="Chromosome"/>
</dbReference>
<dbReference type="Gene3D" id="1.25.40.20">
    <property type="entry name" value="Ankyrin repeat-containing domain"/>
    <property type="match status" value="3"/>
</dbReference>
<dbReference type="InterPro" id="IPR002110">
    <property type="entry name" value="Ankyrin_rpt"/>
</dbReference>
<dbReference type="InterPro" id="IPR036770">
    <property type="entry name" value="Ankyrin_rpt-contain_sf"/>
</dbReference>
<dbReference type="PANTHER" id="PTHR24198">
    <property type="entry name" value="ANKYRIN REPEAT AND PROTEIN KINASE DOMAIN-CONTAINING PROTEIN"/>
    <property type="match status" value="1"/>
</dbReference>
<dbReference type="PANTHER" id="PTHR24198:SF165">
    <property type="entry name" value="ANKYRIN REPEAT-CONTAINING PROTEIN-RELATED"/>
    <property type="match status" value="1"/>
</dbReference>
<dbReference type="Pfam" id="PF12796">
    <property type="entry name" value="Ank_2"/>
    <property type="match status" value="3"/>
</dbReference>
<dbReference type="SMART" id="SM00248">
    <property type="entry name" value="ANK"/>
    <property type="match status" value="9"/>
</dbReference>
<dbReference type="SUPFAM" id="SSF48403">
    <property type="entry name" value="Ankyrin repeat"/>
    <property type="match status" value="1"/>
</dbReference>
<dbReference type="PROSITE" id="PS50297">
    <property type="entry name" value="ANK_REP_REGION"/>
    <property type="match status" value="1"/>
</dbReference>
<dbReference type="PROSITE" id="PS50088">
    <property type="entry name" value="ANK_REPEAT"/>
    <property type="match status" value="5"/>
</dbReference>
<organism>
    <name type="scientific">Rickettsia bellii (strain RML369-C)</name>
    <dbReference type="NCBI Taxonomy" id="336407"/>
    <lineage>
        <taxon>Bacteria</taxon>
        <taxon>Pseudomonadati</taxon>
        <taxon>Pseudomonadota</taxon>
        <taxon>Alphaproteobacteria</taxon>
        <taxon>Rickettsiales</taxon>
        <taxon>Rickettsiaceae</taxon>
        <taxon>Rickettsieae</taxon>
        <taxon>Rickettsia</taxon>
        <taxon>belli group</taxon>
    </lineage>
</organism>
<reference key="1">
    <citation type="journal article" date="2006" name="PLoS Genet.">
        <title>Genome sequence of Rickettsia bellii illuminates the role of amoebae in gene exchanges between intracellular pathogens.</title>
        <authorList>
            <person name="Ogata H."/>
            <person name="La Scola B."/>
            <person name="Audic S."/>
            <person name="Renesto P."/>
            <person name="Blanc G."/>
            <person name="Robert C."/>
            <person name="Fournier P.-E."/>
            <person name="Claverie J.-M."/>
            <person name="Raoult D."/>
        </authorList>
    </citation>
    <scope>NUCLEOTIDE SEQUENCE [LARGE SCALE GENOMIC DNA]</scope>
    <source>
        <strain>RML369-C</strain>
    </source>
</reference>
<feature type="chain" id="PRO_0000280905" description="Putative ankyrin repeat protein RBE_0220">
    <location>
        <begin position="1"/>
        <end position="826"/>
    </location>
</feature>
<feature type="repeat" description="ANK 1">
    <location>
        <begin position="308"/>
        <end position="337"/>
    </location>
</feature>
<feature type="repeat" description="ANK 2">
    <location>
        <begin position="342"/>
        <end position="371"/>
    </location>
</feature>
<feature type="repeat" description="ANK 3">
    <location>
        <begin position="375"/>
        <end position="404"/>
    </location>
</feature>
<feature type="repeat" description="ANK 4">
    <location>
        <begin position="445"/>
        <end position="474"/>
    </location>
</feature>
<feature type="repeat" description="ANK 5">
    <location>
        <begin position="478"/>
        <end position="507"/>
    </location>
</feature>
<feature type="repeat" description="ANK 6">
    <location>
        <begin position="512"/>
        <end position="541"/>
    </location>
</feature>
<feature type="repeat" description="ANK 7">
    <location>
        <begin position="545"/>
        <end position="574"/>
    </location>
</feature>
<feature type="repeat" description="ANK 8">
    <location>
        <begin position="578"/>
        <end position="607"/>
    </location>
</feature>
<sequence>MSKAVISEKAEPRELKALYIVGPEIEPDPEILKLYDRKDCLVVGDGIDDADIYAIYLELKKHNVQIGPNTRIDIAAHGKRVDKKHYLRLSTEEVTETKKFLQQLQGSSPIDPIYVHLWSCYGGTANKDIAFLNPGSIIVTHVKSQYSSFGPADNFAHLHSITRYINEKNLTPHLQYLYDQLENYQATTFNQKESDGRIVKFKTTRTPEHDSMANIISNILEQKQSEELLKEFQNYLNKEAENFSKLFGEYLASEDKEKFQHYTSNISDKDLKNYVTGLLLNIANLSNKNNIKDKEKILTILNKIVNILGTSLLAVTVRNNNVELTKALLNKGADQHAKYTKIDMSLLYIACLNKSVDIAKLLLEYNVDPNYPTTDNDTPLLQACEKKSPELVKALLAKNADPNKVSDRGLSPLIVSCINPSEESREIALNLLANKNIKVNILGPNDFTPLILACYNNSERVVQALLDKEADVNAKDKDGFTPLFAAYRNHSTKITELLLEKGANPDVINPKTKSSILYNACNEGDLNIIKLLLKHKANPNLTTFDGTTPLMAACEKGDLEIAALLLKNGADINKSNNNGDNALFLACKNGNLELVKMLVENGVDLKKGSRGMIASSIAKKNGYEKVGAFLKAEIKSQRTLNTNQSNNPLPPKPPRLIKNTTTQNEENKKTWIKSEANLTLSQPHYNFLQSNSEAKSRALREINPLIEAAIKEVDKVNTVNVAVREEVQNILSKELLRIPINNLVDNKKGIINQITKELKLNNSQDNNNREYKISQQSLKEIGNKIFAAYGHKIQPQLTNTTTHRWQNYIKTTNNTNANKSNYLGKR</sequence>
<proteinExistence type="predicted"/>
<accession>Q1RK13</accession>